<reference key="1">
    <citation type="journal article" date="2004" name="Nat. Genet.">
        <title>Evidence in the Legionella pneumophila genome for exploitation of host cell functions and high genome plasticity.</title>
        <authorList>
            <person name="Cazalet C."/>
            <person name="Rusniok C."/>
            <person name="Brueggemann H."/>
            <person name="Zidane N."/>
            <person name="Magnier A."/>
            <person name="Ma L."/>
            <person name="Tichit M."/>
            <person name="Jarraud S."/>
            <person name="Bouchier C."/>
            <person name="Vandenesch F."/>
            <person name="Kunst F."/>
            <person name="Etienne J."/>
            <person name="Glaser P."/>
            <person name="Buchrieser C."/>
        </authorList>
    </citation>
    <scope>NUCLEOTIDE SEQUENCE [LARGE SCALE GENOMIC DNA]</scope>
    <source>
        <strain>Paris</strain>
    </source>
</reference>
<dbReference type="EC" id="2.3.1.251" evidence="1"/>
<dbReference type="EMBL" id="CR628336">
    <property type="protein sequence ID" value="CAH11173.1"/>
    <property type="molecule type" value="Genomic_DNA"/>
</dbReference>
<dbReference type="RefSeq" id="WP_011212669.1">
    <property type="nucleotide sequence ID" value="NC_006368.1"/>
</dbReference>
<dbReference type="SMR" id="Q5X966"/>
<dbReference type="KEGG" id="lpp:lpp0025"/>
<dbReference type="LegioList" id="lpp0025"/>
<dbReference type="HOGENOM" id="CLU_104099_0_0_6"/>
<dbReference type="GO" id="GO:0009279">
    <property type="term" value="C:cell outer membrane"/>
    <property type="evidence" value="ECO:0007669"/>
    <property type="project" value="UniProtKB-SubCell"/>
</dbReference>
<dbReference type="GO" id="GO:0016746">
    <property type="term" value="F:acyltransferase activity"/>
    <property type="evidence" value="ECO:0007669"/>
    <property type="project" value="UniProtKB-UniRule"/>
</dbReference>
<dbReference type="GO" id="GO:0009245">
    <property type="term" value="P:lipid A biosynthetic process"/>
    <property type="evidence" value="ECO:0007669"/>
    <property type="project" value="UniProtKB-UniRule"/>
</dbReference>
<dbReference type="Gene3D" id="2.40.160.20">
    <property type="match status" value="1"/>
</dbReference>
<dbReference type="HAMAP" id="MF_00837">
    <property type="entry name" value="PagP_transferase"/>
    <property type="match status" value="1"/>
</dbReference>
<dbReference type="InterPro" id="IPR009746">
    <property type="entry name" value="LipidA_acyl_PagP"/>
</dbReference>
<dbReference type="InterPro" id="IPR011250">
    <property type="entry name" value="OMP/PagP_b-brl"/>
</dbReference>
<dbReference type="NCBIfam" id="NF008271">
    <property type="entry name" value="PRK11045.1"/>
    <property type="match status" value="1"/>
</dbReference>
<dbReference type="Pfam" id="PF07017">
    <property type="entry name" value="PagP"/>
    <property type="match status" value="1"/>
</dbReference>
<dbReference type="SUPFAM" id="SSF56925">
    <property type="entry name" value="OMPA-like"/>
    <property type="match status" value="1"/>
</dbReference>
<sequence>MKRLISCLTIICALNASAAAETTSNPCSRWISFLKPVCQRFHQTWTEGHDDMYFSGYAWHNRYVYSNEKIKSYNETAWGGGLGKSLFDEKGNWHGLYAIAFLDSHRHLEPAVGYAYLKTASVNKDLKAGLGYSVLVTSRVDYDNVPIPGALPWAALFYKRITIAATYIPGSSREGHENGNVLYMLGKISL</sequence>
<evidence type="ECO:0000255" key="1">
    <source>
        <dbReference type="HAMAP-Rule" id="MF_00837"/>
    </source>
</evidence>
<name>PAGP_LEGPA</name>
<proteinExistence type="inferred from homology"/>
<gene>
    <name evidence="1" type="primary">pagP</name>
    <name type="synonym">rcp</name>
    <name type="ordered locus">lpp0025</name>
</gene>
<comment type="function">
    <text evidence="1">Transfers a fatty acid residue from the sn-1 position of a phospholipid to the N-linked hydroxyfatty acid chain on the proximal unit of lipid A or its precursors.</text>
</comment>
<comment type="catalytic activity">
    <reaction evidence="1">
        <text>a lipid A + a 1,2-diacyl-sn-glycero-3-phosphocholine = a hepta-acyl lipid A + a 2-acyl-sn-glycero-3-phosphocholine</text>
        <dbReference type="Rhea" id="RHEA:74275"/>
        <dbReference type="ChEBI" id="CHEBI:57643"/>
        <dbReference type="ChEBI" id="CHEBI:57875"/>
        <dbReference type="ChEBI" id="CHEBI:193141"/>
        <dbReference type="ChEBI" id="CHEBI:193142"/>
        <dbReference type="EC" id="2.3.1.251"/>
    </reaction>
</comment>
<comment type="catalytic activity">
    <reaction evidence="1">
        <text>a lipid IVA + a 1,2-diacyl-sn-glycero-3-phosphocholine = a lipid IVB + a 2-acyl-sn-glycero-3-phosphocholine</text>
        <dbReference type="Rhea" id="RHEA:74279"/>
        <dbReference type="ChEBI" id="CHEBI:57643"/>
        <dbReference type="ChEBI" id="CHEBI:57875"/>
        <dbReference type="ChEBI" id="CHEBI:176425"/>
        <dbReference type="ChEBI" id="CHEBI:193143"/>
        <dbReference type="EC" id="2.3.1.251"/>
    </reaction>
</comment>
<comment type="catalytic activity">
    <reaction evidence="1">
        <text>a lipid IIA + a 1,2-diacyl-sn-glycero-3-phosphocholine = a lipid IIB + a 2-acyl-sn-glycero-3-phosphocholine</text>
        <dbReference type="Rhea" id="RHEA:74283"/>
        <dbReference type="ChEBI" id="CHEBI:57643"/>
        <dbReference type="ChEBI" id="CHEBI:57875"/>
        <dbReference type="ChEBI" id="CHEBI:193144"/>
        <dbReference type="ChEBI" id="CHEBI:193145"/>
        <dbReference type="EC" id="2.3.1.251"/>
    </reaction>
</comment>
<comment type="subunit">
    <text evidence="1">Homodimer.</text>
</comment>
<comment type="subcellular location">
    <subcellularLocation>
        <location evidence="1">Cell outer membrane</location>
    </subcellularLocation>
</comment>
<comment type="similarity">
    <text evidence="1">Belongs to the lipid A palmitoyltransferase family.</text>
</comment>
<keyword id="KW-0012">Acyltransferase</keyword>
<keyword id="KW-0998">Cell outer membrane</keyword>
<keyword id="KW-0472">Membrane</keyword>
<keyword id="KW-0732">Signal</keyword>
<keyword id="KW-0808">Transferase</keyword>
<protein>
    <recommendedName>
        <fullName evidence="1">Lipid A acyltransferase PagP</fullName>
        <ecNumber evidence="1">2.3.1.251</ecNumber>
    </recommendedName>
    <alternativeName>
        <fullName evidence="1">Lipid A acylation protein</fullName>
    </alternativeName>
</protein>
<feature type="signal peptide" evidence="1">
    <location>
        <begin position="1"/>
        <end position="18"/>
    </location>
</feature>
<feature type="chain" id="PRO_0000414461" description="Lipid A acyltransferase PagP">
    <location>
        <begin position="19"/>
        <end position="190"/>
    </location>
</feature>
<feature type="active site" evidence="1">
    <location>
        <position position="60"/>
    </location>
</feature>
<feature type="active site" evidence="1">
    <location>
        <position position="103"/>
    </location>
</feature>
<feature type="active site" evidence="1">
    <location>
        <position position="104"/>
    </location>
</feature>
<feature type="site" description="Role in lipopolysaccharide recognition" evidence="1">
    <location>
        <position position="69"/>
    </location>
</feature>
<accession>Q5X966</accession>
<organism>
    <name type="scientific">Legionella pneumophila (strain Paris)</name>
    <dbReference type="NCBI Taxonomy" id="297246"/>
    <lineage>
        <taxon>Bacteria</taxon>
        <taxon>Pseudomonadati</taxon>
        <taxon>Pseudomonadota</taxon>
        <taxon>Gammaproteobacteria</taxon>
        <taxon>Legionellales</taxon>
        <taxon>Legionellaceae</taxon>
        <taxon>Legionella</taxon>
    </lineage>
</organism>